<protein>
    <recommendedName>
        <fullName evidence="1">Orotate phosphoribosyltransferase</fullName>
        <shortName evidence="1">OPRT</shortName>
        <shortName evidence="1">OPRTase</shortName>
        <ecNumber evidence="1">2.4.2.10</ecNumber>
    </recommendedName>
</protein>
<keyword id="KW-0328">Glycosyltransferase</keyword>
<keyword id="KW-0460">Magnesium</keyword>
<keyword id="KW-0665">Pyrimidine biosynthesis</keyword>
<keyword id="KW-1185">Reference proteome</keyword>
<keyword id="KW-0808">Transferase</keyword>
<feature type="chain" id="PRO_1000066245" description="Orotate phosphoribosyltransferase">
    <location>
        <begin position="1"/>
        <end position="210"/>
    </location>
</feature>
<feature type="binding site" evidence="1">
    <location>
        <position position="96"/>
    </location>
    <ligand>
        <name>5-phospho-alpha-D-ribose 1-diphosphate</name>
        <dbReference type="ChEBI" id="CHEBI:58017"/>
        <note>ligand shared between dimeric partners</note>
    </ligand>
</feature>
<feature type="binding site" evidence="1">
    <location>
        <position position="100"/>
    </location>
    <ligand>
        <name>5-phospho-alpha-D-ribose 1-diphosphate</name>
        <dbReference type="ChEBI" id="CHEBI:58017"/>
        <note>ligand shared between dimeric partners</note>
    </ligand>
</feature>
<feature type="binding site" evidence="1">
    <location>
        <position position="102"/>
    </location>
    <ligand>
        <name>5-phospho-alpha-D-ribose 1-diphosphate</name>
        <dbReference type="ChEBI" id="CHEBI:58017"/>
        <note>ligand shared between dimeric partners</note>
    </ligand>
</feature>
<feature type="binding site" description="in other chain" evidence="1">
    <location>
        <begin position="122"/>
        <end position="130"/>
    </location>
    <ligand>
        <name>5-phospho-alpha-D-ribose 1-diphosphate</name>
        <dbReference type="ChEBI" id="CHEBI:58017"/>
        <note>ligand shared between dimeric partners</note>
    </ligand>
</feature>
<feature type="binding site" evidence="1">
    <location>
        <position position="126"/>
    </location>
    <ligand>
        <name>orotate</name>
        <dbReference type="ChEBI" id="CHEBI:30839"/>
    </ligand>
</feature>
<organism>
    <name type="scientific">Levilactobacillus brevis (strain ATCC 367 / BCRC 12310 / CIP 105137 / JCM 1170 / LMG 11437 / NCIMB 947 / NCTC 947)</name>
    <name type="common">Lactobacillus brevis</name>
    <dbReference type="NCBI Taxonomy" id="387344"/>
    <lineage>
        <taxon>Bacteria</taxon>
        <taxon>Bacillati</taxon>
        <taxon>Bacillota</taxon>
        <taxon>Bacilli</taxon>
        <taxon>Lactobacillales</taxon>
        <taxon>Lactobacillaceae</taxon>
        <taxon>Levilactobacillus</taxon>
    </lineage>
</organism>
<evidence type="ECO:0000255" key="1">
    <source>
        <dbReference type="HAMAP-Rule" id="MF_01208"/>
    </source>
</evidence>
<sequence length="210" mass="22425">MIPAEQIATDLLTIGAVTLAPNHPFLWASGMQAPIYTDNRRTIAFPQVRTHIADGLASLIKHRYPTATVISGVATAGITHAALVADRLNLPMSYVRAKPKDHGKGKQIEGQMTASDQVVLIDDLISTGGSVLAAAKAVRKAGATVLGVVAIFSYELPDSVVNFQQAGLALTPLTTYSTLITVAQQQAKITAPEMASLRQWREDPWGWVSV</sequence>
<gene>
    <name evidence="1" type="primary">pyrE</name>
    <name type="ordered locus">LVIS_2228</name>
</gene>
<accession>Q03NE4</accession>
<reference key="1">
    <citation type="journal article" date="2006" name="Proc. Natl. Acad. Sci. U.S.A.">
        <title>Comparative genomics of the lactic acid bacteria.</title>
        <authorList>
            <person name="Makarova K.S."/>
            <person name="Slesarev A."/>
            <person name="Wolf Y.I."/>
            <person name="Sorokin A."/>
            <person name="Mirkin B."/>
            <person name="Koonin E.V."/>
            <person name="Pavlov A."/>
            <person name="Pavlova N."/>
            <person name="Karamychev V."/>
            <person name="Polouchine N."/>
            <person name="Shakhova V."/>
            <person name="Grigoriev I."/>
            <person name="Lou Y."/>
            <person name="Rohksar D."/>
            <person name="Lucas S."/>
            <person name="Huang K."/>
            <person name="Goodstein D.M."/>
            <person name="Hawkins T."/>
            <person name="Plengvidhya V."/>
            <person name="Welker D."/>
            <person name="Hughes J."/>
            <person name="Goh Y."/>
            <person name="Benson A."/>
            <person name="Baldwin K."/>
            <person name="Lee J.-H."/>
            <person name="Diaz-Muniz I."/>
            <person name="Dosti B."/>
            <person name="Smeianov V."/>
            <person name="Wechter W."/>
            <person name="Barabote R."/>
            <person name="Lorca G."/>
            <person name="Altermann E."/>
            <person name="Barrangou R."/>
            <person name="Ganesan B."/>
            <person name="Xie Y."/>
            <person name="Rawsthorne H."/>
            <person name="Tamir D."/>
            <person name="Parker C."/>
            <person name="Breidt F."/>
            <person name="Broadbent J.R."/>
            <person name="Hutkins R."/>
            <person name="O'Sullivan D."/>
            <person name="Steele J."/>
            <person name="Unlu G."/>
            <person name="Saier M.H. Jr."/>
            <person name="Klaenhammer T."/>
            <person name="Richardson P."/>
            <person name="Kozyavkin S."/>
            <person name="Weimer B.C."/>
            <person name="Mills D.A."/>
        </authorList>
    </citation>
    <scope>NUCLEOTIDE SEQUENCE [LARGE SCALE GENOMIC DNA]</scope>
    <source>
        <strain>ATCC 367 / BCRC 12310 / CIP 105137 / JCM 1170 / LMG 11437 / NCIMB 947 / NCTC 947</strain>
    </source>
</reference>
<name>PYRE_LEVBA</name>
<comment type="function">
    <text evidence="1">Catalyzes the transfer of a ribosyl phosphate group from 5-phosphoribose 1-diphosphate to orotate, leading to the formation of orotidine monophosphate (OMP).</text>
</comment>
<comment type="catalytic activity">
    <reaction evidence="1">
        <text>orotidine 5'-phosphate + diphosphate = orotate + 5-phospho-alpha-D-ribose 1-diphosphate</text>
        <dbReference type="Rhea" id="RHEA:10380"/>
        <dbReference type="ChEBI" id="CHEBI:30839"/>
        <dbReference type="ChEBI" id="CHEBI:33019"/>
        <dbReference type="ChEBI" id="CHEBI:57538"/>
        <dbReference type="ChEBI" id="CHEBI:58017"/>
        <dbReference type="EC" id="2.4.2.10"/>
    </reaction>
</comment>
<comment type="cofactor">
    <cofactor evidence="1">
        <name>Mg(2+)</name>
        <dbReference type="ChEBI" id="CHEBI:18420"/>
    </cofactor>
</comment>
<comment type="pathway">
    <text evidence="1">Pyrimidine metabolism; UMP biosynthesis via de novo pathway; UMP from orotate: step 1/2.</text>
</comment>
<comment type="subunit">
    <text evidence="1">Homodimer.</text>
</comment>
<comment type="similarity">
    <text evidence="1">Belongs to the purine/pyrimidine phosphoribosyltransferase family. PyrE subfamily.</text>
</comment>
<proteinExistence type="inferred from homology"/>
<dbReference type="EC" id="2.4.2.10" evidence="1"/>
<dbReference type="EMBL" id="CP000416">
    <property type="protein sequence ID" value="ABJ65278.1"/>
    <property type="molecule type" value="Genomic_DNA"/>
</dbReference>
<dbReference type="RefSeq" id="WP_011668799.1">
    <property type="nucleotide sequence ID" value="NC_008497.1"/>
</dbReference>
<dbReference type="SMR" id="Q03NE4"/>
<dbReference type="STRING" id="387344.LVIS_2228"/>
<dbReference type="KEGG" id="lbr:LVIS_2228"/>
<dbReference type="PATRIC" id="fig|387344.15.peg.2133"/>
<dbReference type="eggNOG" id="COG0461">
    <property type="taxonomic scope" value="Bacteria"/>
</dbReference>
<dbReference type="HOGENOM" id="CLU_074878_1_1_9"/>
<dbReference type="UniPathway" id="UPA00070">
    <property type="reaction ID" value="UER00119"/>
</dbReference>
<dbReference type="Proteomes" id="UP000001652">
    <property type="component" value="Chromosome"/>
</dbReference>
<dbReference type="GO" id="GO:0000287">
    <property type="term" value="F:magnesium ion binding"/>
    <property type="evidence" value="ECO:0007669"/>
    <property type="project" value="UniProtKB-UniRule"/>
</dbReference>
<dbReference type="GO" id="GO:0004588">
    <property type="term" value="F:orotate phosphoribosyltransferase activity"/>
    <property type="evidence" value="ECO:0007669"/>
    <property type="project" value="UniProtKB-UniRule"/>
</dbReference>
<dbReference type="GO" id="GO:0044205">
    <property type="term" value="P:'de novo' UMP biosynthetic process"/>
    <property type="evidence" value="ECO:0007669"/>
    <property type="project" value="UniProtKB-UniRule"/>
</dbReference>
<dbReference type="GO" id="GO:0019856">
    <property type="term" value="P:pyrimidine nucleobase biosynthetic process"/>
    <property type="evidence" value="ECO:0007669"/>
    <property type="project" value="TreeGrafter"/>
</dbReference>
<dbReference type="CDD" id="cd06223">
    <property type="entry name" value="PRTases_typeI"/>
    <property type="match status" value="1"/>
</dbReference>
<dbReference type="Gene3D" id="3.40.50.2020">
    <property type="match status" value="1"/>
</dbReference>
<dbReference type="HAMAP" id="MF_01208">
    <property type="entry name" value="PyrE"/>
    <property type="match status" value="1"/>
</dbReference>
<dbReference type="InterPro" id="IPR023031">
    <property type="entry name" value="OPRT"/>
</dbReference>
<dbReference type="InterPro" id="IPR004467">
    <property type="entry name" value="Or_phspho_trans_dom"/>
</dbReference>
<dbReference type="InterPro" id="IPR000836">
    <property type="entry name" value="PRibTrfase_dom"/>
</dbReference>
<dbReference type="InterPro" id="IPR029057">
    <property type="entry name" value="PRTase-like"/>
</dbReference>
<dbReference type="NCBIfam" id="TIGR00336">
    <property type="entry name" value="pyrE"/>
    <property type="match status" value="1"/>
</dbReference>
<dbReference type="PANTHER" id="PTHR19278">
    <property type="entry name" value="OROTATE PHOSPHORIBOSYLTRANSFERASE"/>
    <property type="match status" value="1"/>
</dbReference>
<dbReference type="PANTHER" id="PTHR19278:SF9">
    <property type="entry name" value="URIDINE 5'-MONOPHOSPHATE SYNTHASE"/>
    <property type="match status" value="1"/>
</dbReference>
<dbReference type="Pfam" id="PF00156">
    <property type="entry name" value="Pribosyltran"/>
    <property type="match status" value="1"/>
</dbReference>
<dbReference type="SUPFAM" id="SSF53271">
    <property type="entry name" value="PRTase-like"/>
    <property type="match status" value="1"/>
</dbReference>
<dbReference type="PROSITE" id="PS00103">
    <property type="entry name" value="PUR_PYR_PR_TRANSFER"/>
    <property type="match status" value="1"/>
</dbReference>